<evidence type="ECO:0000255" key="1">
    <source>
        <dbReference type="HAMAP-Rule" id="MF_00441"/>
    </source>
</evidence>
<evidence type="ECO:0007829" key="2">
    <source>
        <dbReference type="PDB" id="8IWH"/>
    </source>
</evidence>
<organism>
    <name type="scientific">Thalassiosira pseudonana</name>
    <name type="common">Marine diatom</name>
    <name type="synonym">Cyclotella nana</name>
    <dbReference type="NCBI Taxonomy" id="35128"/>
    <lineage>
        <taxon>Eukaryota</taxon>
        <taxon>Sar</taxon>
        <taxon>Stramenopiles</taxon>
        <taxon>Ochrophyta</taxon>
        <taxon>Bacillariophyta</taxon>
        <taxon>Coscinodiscophyceae</taxon>
        <taxon>Thalassiosirophycidae</taxon>
        <taxon>Thalassiosirales</taxon>
        <taxon>Thalassiosiraceae</taxon>
        <taxon>Thalassiosira</taxon>
    </lineage>
</organism>
<dbReference type="EMBL" id="EF067921">
    <property type="protein sequence ID" value="ABK20763.1"/>
    <property type="molecule type" value="Genomic_DNA"/>
</dbReference>
<dbReference type="RefSeq" id="YP_874540.1">
    <property type="nucleotide sequence ID" value="NC_008589.1"/>
</dbReference>
<dbReference type="PDB" id="8IWH">
    <property type="method" value="EM"/>
    <property type="resolution" value="2.68 A"/>
    <property type="chains" value="K/k=1-44"/>
</dbReference>
<dbReference type="PDBsum" id="8IWH"/>
<dbReference type="EMDB" id="EMD-35766"/>
<dbReference type="SMR" id="A0T0S8"/>
<dbReference type="STRING" id="35128.A0T0S8"/>
<dbReference type="GeneID" id="4524783"/>
<dbReference type="InParanoid" id="A0T0S8"/>
<dbReference type="GO" id="GO:0009535">
    <property type="term" value="C:chloroplast thylakoid membrane"/>
    <property type="evidence" value="ECO:0007669"/>
    <property type="project" value="UniProtKB-SubCell"/>
</dbReference>
<dbReference type="GO" id="GO:0009539">
    <property type="term" value="C:photosystem II reaction center"/>
    <property type="evidence" value="ECO:0007669"/>
    <property type="project" value="InterPro"/>
</dbReference>
<dbReference type="GO" id="GO:0015979">
    <property type="term" value="P:photosynthesis"/>
    <property type="evidence" value="ECO:0007669"/>
    <property type="project" value="UniProtKB-UniRule"/>
</dbReference>
<dbReference type="HAMAP" id="MF_00441">
    <property type="entry name" value="PSII_PsbK"/>
    <property type="match status" value="1"/>
</dbReference>
<dbReference type="InterPro" id="IPR003687">
    <property type="entry name" value="PSII_PsbK"/>
</dbReference>
<dbReference type="InterPro" id="IPR037270">
    <property type="entry name" value="PSII_PsbK_sf"/>
</dbReference>
<dbReference type="NCBIfam" id="NF002715">
    <property type="entry name" value="PRK02553.1"/>
    <property type="match status" value="1"/>
</dbReference>
<dbReference type="PANTHER" id="PTHR35325">
    <property type="match status" value="1"/>
</dbReference>
<dbReference type="PANTHER" id="PTHR35325:SF1">
    <property type="entry name" value="PHOTOSYSTEM II REACTION CENTER PROTEIN K"/>
    <property type="match status" value="1"/>
</dbReference>
<dbReference type="Pfam" id="PF02533">
    <property type="entry name" value="PsbK"/>
    <property type="match status" value="1"/>
</dbReference>
<dbReference type="SUPFAM" id="SSF161037">
    <property type="entry name" value="Photosystem II reaction center protein K, PsbK"/>
    <property type="match status" value="1"/>
</dbReference>
<reference key="1">
    <citation type="journal article" date="2007" name="Mol. Genet. Genomics">
        <title>Chloroplast genomes of the diatoms Phaeodactylum tricornutum and Thalassiosira pseudonana: comparison with other plastid genomes of the red lineage.</title>
        <authorList>
            <person name="Oudot-Le Secq M.-P."/>
            <person name="Grimwood J."/>
            <person name="Shapiro H."/>
            <person name="Armbrust E.V."/>
            <person name="Bowler C."/>
            <person name="Green B.R."/>
        </authorList>
    </citation>
    <scope>NUCLEOTIDE SEQUENCE [LARGE SCALE GENOMIC DNA]</scope>
    <source>
        <strain>CCMP1335 / NEPCC58 / CCAP 1085/12</strain>
    </source>
</reference>
<accession>A0T0S8</accession>
<name>PSBK_THAPS</name>
<protein>
    <recommendedName>
        <fullName evidence="1">Photosystem II reaction center protein K</fullName>
        <shortName evidence="1">PSII-K</shortName>
    </recommendedName>
</protein>
<gene>
    <name evidence="1" type="primary">psbK</name>
</gene>
<geneLocation type="chloroplast"/>
<keyword id="KW-0002">3D-structure</keyword>
<keyword id="KW-0150">Chloroplast</keyword>
<keyword id="KW-0472">Membrane</keyword>
<keyword id="KW-0602">Photosynthesis</keyword>
<keyword id="KW-0604">Photosystem II</keyword>
<keyword id="KW-0934">Plastid</keyword>
<keyword id="KW-0674">Reaction center</keyword>
<keyword id="KW-0793">Thylakoid</keyword>
<keyword id="KW-0812">Transmembrane</keyword>
<keyword id="KW-1133">Transmembrane helix</keyword>
<sequence length="44" mass="4982">MESLLLARLPEAYVVFSPLVDVFPVIPVFFLLLAFVWQAAVGFR</sequence>
<feature type="propeptide" id="PRO_0000276198" evidence="1">
    <location>
        <begin position="1"/>
        <end position="7"/>
    </location>
</feature>
<feature type="chain" id="PRO_0000276199" description="Photosystem II reaction center protein K" evidence="1">
    <location>
        <begin position="8"/>
        <end position="44"/>
    </location>
</feature>
<feature type="transmembrane region" description="Helical" evidence="1">
    <location>
        <begin position="23"/>
        <end position="43"/>
    </location>
</feature>
<feature type="helix" evidence="2">
    <location>
        <begin position="11"/>
        <end position="16"/>
    </location>
</feature>
<feature type="helix" evidence="2">
    <location>
        <begin position="17"/>
        <end position="20"/>
    </location>
</feature>
<feature type="helix" evidence="2">
    <location>
        <begin position="23"/>
        <end position="25"/>
    </location>
</feature>
<feature type="helix" evidence="2">
    <location>
        <begin position="26"/>
        <end position="40"/>
    </location>
</feature>
<comment type="function">
    <text evidence="1">One of the components of the core complex of photosystem II (PSII). PSII is a light-driven water:plastoquinone oxidoreductase that uses light energy to abstract electrons from H(2)O, generating O(2) and a proton gradient subsequently used for ATP formation. It consists of a core antenna complex that captures photons, and an electron transfer chain that converts photonic excitation into a charge separation.</text>
</comment>
<comment type="subunit">
    <text evidence="1">PSII is composed of 1 copy each of membrane proteins PsbA, PsbB, PsbC, PsbD, PsbE, PsbF, PsbH, PsbI, PsbJ, PsbK, PsbL, PsbM, PsbT, PsbX, PsbY, PsbZ, Psb30/Ycf12, at least 3 peripheral proteins of the oxygen-evolving complex and a large number of cofactors. It forms dimeric complexes.</text>
</comment>
<comment type="subcellular location">
    <subcellularLocation>
        <location evidence="1">Plastid</location>
        <location evidence="1">Chloroplast thylakoid membrane</location>
        <topology evidence="1">Single-pass membrane protein</topology>
    </subcellularLocation>
</comment>
<comment type="similarity">
    <text evidence="1">Belongs to the PsbK family.</text>
</comment>
<proteinExistence type="evidence at protein level"/>